<name>DXS_PSEPK</name>
<gene>
    <name evidence="1" type="primary">dxs</name>
    <name type="ordered locus">PP_0527</name>
</gene>
<organism>
    <name type="scientific">Pseudomonas putida (strain ATCC 47054 / DSM 6125 / CFBP 8728 / NCIMB 11950 / KT2440)</name>
    <dbReference type="NCBI Taxonomy" id="160488"/>
    <lineage>
        <taxon>Bacteria</taxon>
        <taxon>Pseudomonadati</taxon>
        <taxon>Pseudomonadota</taxon>
        <taxon>Gammaproteobacteria</taxon>
        <taxon>Pseudomonadales</taxon>
        <taxon>Pseudomonadaceae</taxon>
        <taxon>Pseudomonas</taxon>
    </lineage>
</organism>
<sequence>MPTTFQEIPRERPVTPLLDRADTPAGLRRLAEADLETLADELRQELLYTVGQTGGHFGAGLGVIELTIALHYVFDTPDDRLVWDVGHQAYPHKILTGRRNRMLSLRQKDGIAAFPRRSESEYDTFGVGHSSTSISAALGMAIAARLQNSARKSIAVIGDGALTAGMAFEALNHAQEVNADMLVILNDNDMSISRNVGGLSNYLAKILSSRTYASMREGSKKVLSRLPGAWEIARRTEEYAKGMLVPGTLFEELGWNYIGPIDGHDLPTMIATLRNMRDLKGPQFLHVVTKKGKGFAPAEIDPIGYHAITKLEPADKPAAPKKASGPKYSAVFGQWLCDMAAADNRLVGITPAMKEGSDLVDFSERYPERYFDVAIAEQHAVTLAAGMACEGSKPVVAIYSTFLQRAYDQLIHDVAVQNLDVLFAIDRAGLVGEDGPTHAGSYDLSYLRCIPGMLVMTPSDENELRKMLSTGHLYNGPAAVRYPRGTGPNAPISGDLQPLEIGKGVVRRQGEKVALLVFGVQLAEAMQVAEQINATVVDMRFVKPLDEALVLELAGSHELLVTIEENAIMGGAGAAVGEFLASQAVLKPLLHLGLPDIYVEHAKPAQMLAECGLDAAGIEASVKARMARLGL</sequence>
<comment type="function">
    <text evidence="1">Catalyzes the acyloin condensation reaction between C atoms 2 and 3 of pyruvate and glyceraldehyde 3-phosphate to yield 1-deoxy-D-xylulose-5-phosphate (DXP).</text>
</comment>
<comment type="catalytic activity">
    <reaction evidence="1">
        <text>D-glyceraldehyde 3-phosphate + pyruvate + H(+) = 1-deoxy-D-xylulose 5-phosphate + CO2</text>
        <dbReference type="Rhea" id="RHEA:12605"/>
        <dbReference type="ChEBI" id="CHEBI:15361"/>
        <dbReference type="ChEBI" id="CHEBI:15378"/>
        <dbReference type="ChEBI" id="CHEBI:16526"/>
        <dbReference type="ChEBI" id="CHEBI:57792"/>
        <dbReference type="ChEBI" id="CHEBI:59776"/>
        <dbReference type="EC" id="2.2.1.7"/>
    </reaction>
</comment>
<comment type="cofactor">
    <cofactor evidence="1">
        <name>Mg(2+)</name>
        <dbReference type="ChEBI" id="CHEBI:18420"/>
    </cofactor>
    <text evidence="1">Binds 1 Mg(2+) ion per subunit.</text>
</comment>
<comment type="cofactor">
    <cofactor evidence="1">
        <name>thiamine diphosphate</name>
        <dbReference type="ChEBI" id="CHEBI:58937"/>
    </cofactor>
    <text evidence="1">Binds 1 thiamine pyrophosphate per subunit.</text>
</comment>
<comment type="pathway">
    <text evidence="1">Metabolic intermediate biosynthesis; 1-deoxy-D-xylulose 5-phosphate biosynthesis; 1-deoxy-D-xylulose 5-phosphate from D-glyceraldehyde 3-phosphate and pyruvate: step 1/1.</text>
</comment>
<comment type="subunit">
    <text evidence="1">Homodimer.</text>
</comment>
<comment type="similarity">
    <text evidence="1">Belongs to the transketolase family. DXPS subfamily.</text>
</comment>
<comment type="sequence caution" evidence="2">
    <conflict type="erroneous initiation">
        <sequence resource="EMBL-CDS" id="AAN66154"/>
    </conflict>
</comment>
<reference key="1">
    <citation type="journal article" date="2002" name="Environ. Microbiol.">
        <title>Complete genome sequence and comparative analysis of the metabolically versatile Pseudomonas putida KT2440.</title>
        <authorList>
            <person name="Nelson K.E."/>
            <person name="Weinel C."/>
            <person name="Paulsen I.T."/>
            <person name="Dodson R.J."/>
            <person name="Hilbert H."/>
            <person name="Martins dos Santos V.A.P."/>
            <person name="Fouts D.E."/>
            <person name="Gill S.R."/>
            <person name="Pop M."/>
            <person name="Holmes M."/>
            <person name="Brinkac L.M."/>
            <person name="Beanan M.J."/>
            <person name="DeBoy R.T."/>
            <person name="Daugherty S.C."/>
            <person name="Kolonay J.F."/>
            <person name="Madupu R."/>
            <person name="Nelson W.C."/>
            <person name="White O."/>
            <person name="Peterson J.D."/>
            <person name="Khouri H.M."/>
            <person name="Hance I."/>
            <person name="Chris Lee P."/>
            <person name="Holtzapple E.K."/>
            <person name="Scanlan D."/>
            <person name="Tran K."/>
            <person name="Moazzez A."/>
            <person name="Utterback T.R."/>
            <person name="Rizzo M."/>
            <person name="Lee K."/>
            <person name="Kosack D."/>
            <person name="Moestl D."/>
            <person name="Wedler H."/>
            <person name="Lauber J."/>
            <person name="Stjepandic D."/>
            <person name="Hoheisel J."/>
            <person name="Straetz M."/>
            <person name="Heim S."/>
            <person name="Kiewitz C."/>
            <person name="Eisen J.A."/>
            <person name="Timmis K.N."/>
            <person name="Duesterhoeft A."/>
            <person name="Tuemmler B."/>
            <person name="Fraser C.M."/>
        </authorList>
    </citation>
    <scope>NUCLEOTIDE SEQUENCE [LARGE SCALE GENOMIC DNA]</scope>
    <source>
        <strain>ATCC 47054 / DSM 6125 / CFBP 8728 / NCIMB 11950 / KT2440</strain>
    </source>
</reference>
<keyword id="KW-0414">Isoprene biosynthesis</keyword>
<keyword id="KW-0460">Magnesium</keyword>
<keyword id="KW-0479">Metal-binding</keyword>
<keyword id="KW-1185">Reference proteome</keyword>
<keyword id="KW-0784">Thiamine biosynthesis</keyword>
<keyword id="KW-0786">Thiamine pyrophosphate</keyword>
<keyword id="KW-0808">Transferase</keyword>
<protein>
    <recommendedName>
        <fullName evidence="1">1-deoxy-D-xylulose-5-phosphate synthase</fullName>
        <ecNumber evidence="1">2.2.1.7</ecNumber>
    </recommendedName>
    <alternativeName>
        <fullName evidence="1">1-deoxyxylulose-5-phosphate synthase</fullName>
        <shortName evidence="1">DXP synthase</shortName>
        <shortName evidence="1">DXPS</shortName>
    </alternativeName>
</protein>
<evidence type="ECO:0000255" key="1">
    <source>
        <dbReference type="HAMAP-Rule" id="MF_00315"/>
    </source>
</evidence>
<evidence type="ECO:0000305" key="2"/>
<proteinExistence type="inferred from homology"/>
<accession>Q88QG7</accession>
<feature type="chain" id="PRO_0000189143" description="1-deoxy-D-xylulose-5-phosphate synthase">
    <location>
        <begin position="1"/>
        <end position="631"/>
    </location>
</feature>
<feature type="binding site" evidence="1">
    <location>
        <position position="87"/>
    </location>
    <ligand>
        <name>thiamine diphosphate</name>
        <dbReference type="ChEBI" id="CHEBI:58937"/>
    </ligand>
</feature>
<feature type="binding site" evidence="1">
    <location>
        <begin position="128"/>
        <end position="130"/>
    </location>
    <ligand>
        <name>thiamine diphosphate</name>
        <dbReference type="ChEBI" id="CHEBI:58937"/>
    </ligand>
</feature>
<feature type="binding site" evidence="1">
    <location>
        <position position="159"/>
    </location>
    <ligand>
        <name>Mg(2+)</name>
        <dbReference type="ChEBI" id="CHEBI:18420"/>
    </ligand>
</feature>
<feature type="binding site" evidence="1">
    <location>
        <begin position="160"/>
        <end position="161"/>
    </location>
    <ligand>
        <name>thiamine diphosphate</name>
        <dbReference type="ChEBI" id="CHEBI:58937"/>
    </ligand>
</feature>
<feature type="binding site" evidence="1">
    <location>
        <position position="188"/>
    </location>
    <ligand>
        <name>Mg(2+)</name>
        <dbReference type="ChEBI" id="CHEBI:18420"/>
    </ligand>
</feature>
<feature type="binding site" evidence="1">
    <location>
        <position position="188"/>
    </location>
    <ligand>
        <name>thiamine diphosphate</name>
        <dbReference type="ChEBI" id="CHEBI:58937"/>
    </ligand>
</feature>
<feature type="binding site" evidence="1">
    <location>
        <position position="295"/>
    </location>
    <ligand>
        <name>thiamine diphosphate</name>
        <dbReference type="ChEBI" id="CHEBI:58937"/>
    </ligand>
</feature>
<feature type="binding site" evidence="1">
    <location>
        <position position="377"/>
    </location>
    <ligand>
        <name>thiamine diphosphate</name>
        <dbReference type="ChEBI" id="CHEBI:58937"/>
    </ligand>
</feature>
<dbReference type="EC" id="2.2.1.7" evidence="1"/>
<dbReference type="EMBL" id="AE015451">
    <property type="protein sequence ID" value="AAN66154.1"/>
    <property type="status" value="ALT_INIT"/>
    <property type="molecule type" value="Genomic_DNA"/>
</dbReference>
<dbReference type="RefSeq" id="NP_742690.2">
    <property type="nucleotide sequence ID" value="NC_002947.4"/>
</dbReference>
<dbReference type="RefSeq" id="WP_010951809.1">
    <property type="nucleotide sequence ID" value="NZ_CP169744.1"/>
</dbReference>
<dbReference type="SMR" id="Q88QG7"/>
<dbReference type="STRING" id="160488.PP_0527"/>
<dbReference type="PaxDb" id="160488-PP_0527"/>
<dbReference type="GeneID" id="83677826"/>
<dbReference type="KEGG" id="ppu:PP_0527"/>
<dbReference type="PATRIC" id="fig|160488.4.peg.563"/>
<dbReference type="eggNOG" id="COG1154">
    <property type="taxonomic scope" value="Bacteria"/>
</dbReference>
<dbReference type="HOGENOM" id="CLU_009227_1_4_6"/>
<dbReference type="OrthoDB" id="9803371at2"/>
<dbReference type="PhylomeDB" id="Q88QG7"/>
<dbReference type="BioCyc" id="PPUT160488:G1G01-576-MONOMER"/>
<dbReference type="UniPathway" id="UPA00064">
    <property type="reaction ID" value="UER00091"/>
</dbReference>
<dbReference type="Proteomes" id="UP000000556">
    <property type="component" value="Chromosome"/>
</dbReference>
<dbReference type="GO" id="GO:0005829">
    <property type="term" value="C:cytosol"/>
    <property type="evidence" value="ECO:0007669"/>
    <property type="project" value="TreeGrafter"/>
</dbReference>
<dbReference type="GO" id="GO:0008661">
    <property type="term" value="F:1-deoxy-D-xylulose-5-phosphate synthase activity"/>
    <property type="evidence" value="ECO:0007669"/>
    <property type="project" value="UniProtKB-UniRule"/>
</dbReference>
<dbReference type="GO" id="GO:0000287">
    <property type="term" value="F:magnesium ion binding"/>
    <property type="evidence" value="ECO:0007669"/>
    <property type="project" value="UniProtKB-UniRule"/>
</dbReference>
<dbReference type="GO" id="GO:0030976">
    <property type="term" value="F:thiamine pyrophosphate binding"/>
    <property type="evidence" value="ECO:0007669"/>
    <property type="project" value="UniProtKB-UniRule"/>
</dbReference>
<dbReference type="GO" id="GO:0052865">
    <property type="term" value="P:1-deoxy-D-xylulose 5-phosphate biosynthetic process"/>
    <property type="evidence" value="ECO:0007669"/>
    <property type="project" value="UniProtKB-UniPathway"/>
</dbReference>
<dbReference type="GO" id="GO:0019288">
    <property type="term" value="P:isopentenyl diphosphate biosynthetic process, methylerythritol 4-phosphate pathway"/>
    <property type="evidence" value="ECO:0007669"/>
    <property type="project" value="TreeGrafter"/>
</dbReference>
<dbReference type="GO" id="GO:0016114">
    <property type="term" value="P:terpenoid biosynthetic process"/>
    <property type="evidence" value="ECO:0007669"/>
    <property type="project" value="UniProtKB-UniRule"/>
</dbReference>
<dbReference type="GO" id="GO:0009228">
    <property type="term" value="P:thiamine biosynthetic process"/>
    <property type="evidence" value="ECO:0007669"/>
    <property type="project" value="UniProtKB-UniRule"/>
</dbReference>
<dbReference type="CDD" id="cd02007">
    <property type="entry name" value="TPP_DXS"/>
    <property type="match status" value="1"/>
</dbReference>
<dbReference type="CDD" id="cd07033">
    <property type="entry name" value="TPP_PYR_DXS_TK_like"/>
    <property type="match status" value="1"/>
</dbReference>
<dbReference type="FunFam" id="3.40.50.920:FF:000002">
    <property type="entry name" value="1-deoxy-D-xylulose-5-phosphate synthase"/>
    <property type="match status" value="1"/>
</dbReference>
<dbReference type="FunFam" id="3.40.50.970:FF:000005">
    <property type="entry name" value="1-deoxy-D-xylulose-5-phosphate synthase"/>
    <property type="match status" value="1"/>
</dbReference>
<dbReference type="Gene3D" id="3.40.50.920">
    <property type="match status" value="1"/>
</dbReference>
<dbReference type="Gene3D" id="3.40.50.970">
    <property type="match status" value="2"/>
</dbReference>
<dbReference type="HAMAP" id="MF_00315">
    <property type="entry name" value="DXP_synth"/>
    <property type="match status" value="1"/>
</dbReference>
<dbReference type="InterPro" id="IPR005477">
    <property type="entry name" value="Dxylulose-5-P_synthase"/>
</dbReference>
<dbReference type="InterPro" id="IPR029061">
    <property type="entry name" value="THDP-binding"/>
</dbReference>
<dbReference type="InterPro" id="IPR009014">
    <property type="entry name" value="Transketo_C/PFOR_II"/>
</dbReference>
<dbReference type="InterPro" id="IPR005475">
    <property type="entry name" value="Transketolase-like_Pyr-bd"/>
</dbReference>
<dbReference type="InterPro" id="IPR020826">
    <property type="entry name" value="Transketolase_BS"/>
</dbReference>
<dbReference type="InterPro" id="IPR033248">
    <property type="entry name" value="Transketolase_C"/>
</dbReference>
<dbReference type="NCBIfam" id="TIGR00204">
    <property type="entry name" value="dxs"/>
    <property type="match status" value="1"/>
</dbReference>
<dbReference type="NCBIfam" id="NF003933">
    <property type="entry name" value="PRK05444.2-2"/>
    <property type="match status" value="1"/>
</dbReference>
<dbReference type="PANTHER" id="PTHR43322">
    <property type="entry name" value="1-D-DEOXYXYLULOSE 5-PHOSPHATE SYNTHASE-RELATED"/>
    <property type="match status" value="1"/>
</dbReference>
<dbReference type="PANTHER" id="PTHR43322:SF5">
    <property type="entry name" value="1-DEOXY-D-XYLULOSE-5-PHOSPHATE SYNTHASE, CHLOROPLASTIC"/>
    <property type="match status" value="1"/>
</dbReference>
<dbReference type="Pfam" id="PF13292">
    <property type="entry name" value="DXP_synthase_N"/>
    <property type="match status" value="1"/>
</dbReference>
<dbReference type="Pfam" id="PF02779">
    <property type="entry name" value="Transket_pyr"/>
    <property type="match status" value="1"/>
</dbReference>
<dbReference type="Pfam" id="PF02780">
    <property type="entry name" value="Transketolase_C"/>
    <property type="match status" value="1"/>
</dbReference>
<dbReference type="SMART" id="SM00861">
    <property type="entry name" value="Transket_pyr"/>
    <property type="match status" value="1"/>
</dbReference>
<dbReference type="SUPFAM" id="SSF52518">
    <property type="entry name" value="Thiamin diphosphate-binding fold (THDP-binding)"/>
    <property type="match status" value="2"/>
</dbReference>
<dbReference type="SUPFAM" id="SSF52922">
    <property type="entry name" value="TK C-terminal domain-like"/>
    <property type="match status" value="1"/>
</dbReference>
<dbReference type="PROSITE" id="PS00802">
    <property type="entry name" value="TRANSKETOLASE_2"/>
    <property type="match status" value="1"/>
</dbReference>